<dbReference type="EMBL" id="AL009126">
    <property type="protein sequence ID" value="CCQ48595.1"/>
    <property type="molecule type" value="Genomic_DNA"/>
</dbReference>
<dbReference type="RefSeq" id="YP_009513948.1">
    <property type="nucleotide sequence ID" value="NC_000964.3"/>
</dbReference>
<dbReference type="STRING" id="224308.BSU09959"/>
<dbReference type="PaxDb" id="224308-BSU09959"/>
<dbReference type="EnsemblBacteria" id="CCQ48595">
    <property type="protein sequence ID" value="CCQ48595"/>
    <property type="gene ID" value="BSU_09959"/>
</dbReference>
<dbReference type="GeneID" id="37862827"/>
<dbReference type="PATRIC" id="fig|224308.179.peg.1070"/>
<dbReference type="InParanoid" id="L8EBJ6"/>
<dbReference type="BioCyc" id="BSUB:MONOMER8J2-7"/>
<dbReference type="Proteomes" id="UP000001570">
    <property type="component" value="Chromosome"/>
</dbReference>
<dbReference type="GO" id="GO:0016020">
    <property type="term" value="C:membrane"/>
    <property type="evidence" value="ECO:0007669"/>
    <property type="project" value="UniProtKB-SubCell"/>
</dbReference>
<dbReference type="GO" id="GO:0030435">
    <property type="term" value="P:sporulation resulting in formation of a cellular spore"/>
    <property type="evidence" value="ECO:0007669"/>
    <property type="project" value="UniProtKB-KW"/>
</dbReference>
<dbReference type="InterPro" id="IPR010070">
    <property type="entry name" value="YjcZ-like"/>
</dbReference>
<dbReference type="NCBIfam" id="TIGR01732">
    <property type="entry name" value="tiny_TM_bacill"/>
    <property type="match status" value="1"/>
</dbReference>
<dbReference type="Pfam" id="PF09680">
    <property type="entry name" value="YjcZ_2"/>
    <property type="match status" value="1"/>
</dbReference>
<comment type="subcellular location">
    <subcellularLocation>
        <location evidence="1">Membrane</location>
        <topology evidence="1">Single-pass membrane protein</topology>
    </subcellularLocation>
</comment>
<comment type="developmental stage">
    <text evidence="2">Expressed during the later stages of sporulation.</text>
</comment>
<comment type="induction">
    <text evidence="2">Expression is regulated by the mother cell-specific transcription factors sigma K and GerE.</text>
</comment>
<comment type="similarity">
    <text evidence="4">Belongs to the SscA family.</text>
</comment>
<evidence type="ECO:0000255" key="1"/>
<evidence type="ECO:0000269" key="2">
    <source>
    </source>
</evidence>
<evidence type="ECO:0000303" key="3">
    <source>
    </source>
</evidence>
<evidence type="ECO:0000305" key="4"/>
<evidence type="ECO:0000312" key="5">
    <source>
        <dbReference type="EMBL" id="CCQ48595.1"/>
    </source>
</evidence>
<proteinExistence type="evidence at transcript level"/>
<organism>
    <name type="scientific">Bacillus subtilis (strain 168)</name>
    <dbReference type="NCBI Taxonomy" id="224308"/>
    <lineage>
        <taxon>Bacteria</taxon>
        <taxon>Bacillati</taxon>
        <taxon>Bacillota</taxon>
        <taxon>Bacilli</taxon>
        <taxon>Bacillales</taxon>
        <taxon>Bacillaceae</taxon>
        <taxon>Bacillus</taxon>
    </lineage>
</organism>
<feature type="chain" id="PRO_0000444604" description="Probable small spore coat assembly protein B">
    <location>
        <begin position="1"/>
        <end position="28"/>
    </location>
</feature>
<feature type="transmembrane region" description="Helical" evidence="1">
    <location>
        <begin position="4"/>
        <end position="24"/>
    </location>
</feature>
<gene>
    <name evidence="5" type="primary">sscB</name>
    <name evidence="5" type="ordered locus">BSU_09959</name>
</gene>
<name>SSCB_BACSU</name>
<keyword id="KW-0472">Membrane</keyword>
<keyword id="KW-1185">Reference proteome</keyword>
<keyword id="KW-0749">Sporulation</keyword>
<keyword id="KW-0812">Transmembrane</keyword>
<keyword id="KW-1133">Transmembrane helix</keyword>
<sequence length="28" mass="3027">MGEVFAGGFALLVVLFILLIIIGASWLY</sequence>
<accession>L8EBJ6</accession>
<protein>
    <recommendedName>
        <fullName evidence="4">Probable small spore coat assembly protein B</fullName>
    </recommendedName>
    <alternativeName>
        <fullName evidence="3">ORF-62</fullName>
    </alternativeName>
</protein>
<reference key="1">
    <citation type="journal article" date="1997" name="Nature">
        <title>The complete genome sequence of the Gram-positive bacterium Bacillus subtilis.</title>
        <authorList>
            <person name="Kunst F."/>
            <person name="Ogasawara N."/>
            <person name="Moszer I."/>
            <person name="Albertini A.M."/>
            <person name="Alloni G."/>
            <person name="Azevedo V."/>
            <person name="Bertero M.G."/>
            <person name="Bessieres P."/>
            <person name="Bolotin A."/>
            <person name="Borchert S."/>
            <person name="Borriss R."/>
            <person name="Boursier L."/>
            <person name="Brans A."/>
            <person name="Braun M."/>
            <person name="Brignell S.C."/>
            <person name="Bron S."/>
            <person name="Brouillet S."/>
            <person name="Bruschi C.V."/>
            <person name="Caldwell B."/>
            <person name="Capuano V."/>
            <person name="Carter N.M."/>
            <person name="Choi S.-K."/>
            <person name="Codani J.-J."/>
            <person name="Connerton I.F."/>
            <person name="Cummings N.J."/>
            <person name="Daniel R.A."/>
            <person name="Denizot F."/>
            <person name="Devine K.M."/>
            <person name="Duesterhoeft A."/>
            <person name="Ehrlich S.D."/>
            <person name="Emmerson P.T."/>
            <person name="Entian K.-D."/>
            <person name="Errington J."/>
            <person name="Fabret C."/>
            <person name="Ferrari E."/>
            <person name="Foulger D."/>
            <person name="Fritz C."/>
            <person name="Fujita M."/>
            <person name="Fujita Y."/>
            <person name="Fuma S."/>
            <person name="Galizzi A."/>
            <person name="Galleron N."/>
            <person name="Ghim S.-Y."/>
            <person name="Glaser P."/>
            <person name="Goffeau A."/>
            <person name="Golightly E.J."/>
            <person name="Grandi G."/>
            <person name="Guiseppi G."/>
            <person name="Guy B.J."/>
            <person name="Haga K."/>
            <person name="Haiech J."/>
            <person name="Harwood C.R."/>
            <person name="Henaut A."/>
            <person name="Hilbert H."/>
            <person name="Holsappel S."/>
            <person name="Hosono S."/>
            <person name="Hullo M.-F."/>
            <person name="Itaya M."/>
            <person name="Jones L.-M."/>
            <person name="Joris B."/>
            <person name="Karamata D."/>
            <person name="Kasahara Y."/>
            <person name="Klaerr-Blanchard M."/>
            <person name="Klein C."/>
            <person name="Kobayashi Y."/>
            <person name="Koetter P."/>
            <person name="Koningstein G."/>
            <person name="Krogh S."/>
            <person name="Kumano M."/>
            <person name="Kurita K."/>
            <person name="Lapidus A."/>
            <person name="Lardinois S."/>
            <person name="Lauber J."/>
            <person name="Lazarevic V."/>
            <person name="Lee S.-M."/>
            <person name="Levine A."/>
            <person name="Liu H."/>
            <person name="Masuda S."/>
            <person name="Mauel C."/>
            <person name="Medigue C."/>
            <person name="Medina N."/>
            <person name="Mellado R.P."/>
            <person name="Mizuno M."/>
            <person name="Moestl D."/>
            <person name="Nakai S."/>
            <person name="Noback M."/>
            <person name="Noone D."/>
            <person name="O'Reilly M."/>
            <person name="Ogawa K."/>
            <person name="Ogiwara A."/>
            <person name="Oudega B."/>
            <person name="Park S.-H."/>
            <person name="Parro V."/>
            <person name="Pohl T.M."/>
            <person name="Portetelle D."/>
            <person name="Porwollik S."/>
            <person name="Prescott A.M."/>
            <person name="Presecan E."/>
            <person name="Pujic P."/>
            <person name="Purnelle B."/>
            <person name="Rapoport G."/>
            <person name="Rey M."/>
            <person name="Reynolds S."/>
            <person name="Rieger M."/>
            <person name="Rivolta C."/>
            <person name="Rocha E."/>
            <person name="Roche B."/>
            <person name="Rose M."/>
            <person name="Sadaie Y."/>
            <person name="Sato T."/>
            <person name="Scanlan E."/>
            <person name="Schleich S."/>
            <person name="Schroeter R."/>
            <person name="Scoffone F."/>
            <person name="Sekiguchi J."/>
            <person name="Sekowska A."/>
            <person name="Seror S.J."/>
            <person name="Serror P."/>
            <person name="Shin B.-S."/>
            <person name="Soldo B."/>
            <person name="Sorokin A."/>
            <person name="Tacconi E."/>
            <person name="Takagi T."/>
            <person name="Takahashi H."/>
            <person name="Takemaru K."/>
            <person name="Takeuchi M."/>
            <person name="Tamakoshi A."/>
            <person name="Tanaka T."/>
            <person name="Terpstra P."/>
            <person name="Tognoni A."/>
            <person name="Tosato V."/>
            <person name="Uchiyama S."/>
            <person name="Vandenbol M."/>
            <person name="Vannier F."/>
            <person name="Vassarotti A."/>
            <person name="Viari A."/>
            <person name="Wambutt R."/>
            <person name="Wedler E."/>
            <person name="Wedler H."/>
            <person name="Weitzenegger T."/>
            <person name="Winters P."/>
            <person name="Wipat A."/>
            <person name="Yamamoto H."/>
            <person name="Yamane K."/>
            <person name="Yasumoto K."/>
            <person name="Yata K."/>
            <person name="Yoshida K."/>
            <person name="Yoshikawa H.-F."/>
            <person name="Zumstein E."/>
            <person name="Yoshikawa H."/>
            <person name="Danchin A."/>
        </authorList>
    </citation>
    <scope>NUCLEOTIDE SEQUENCE [LARGE SCALE GENOMIC DNA]</scope>
    <source>
        <strain>168</strain>
    </source>
</reference>
<reference key="2">
    <citation type="journal article" date="2018" name="Microb. Biotechnol.">
        <title>Bacillus subtilis, the model Gram-positive bacterium: 20 years of annotation refinement.</title>
        <authorList>
            <person name="Borriss R."/>
            <person name="Danchin A."/>
            <person name="Harwood C.R."/>
            <person name="Medigue C."/>
            <person name="Rocha E.P.C."/>
            <person name="Sekowska A."/>
            <person name="Vallenet D."/>
        </authorList>
    </citation>
    <scope>NUCLEOTIDE SEQUENCE [LARGE SCALE GENOMIC DNA]</scope>
    <source>
        <strain>168</strain>
    </source>
</reference>
<reference key="3">
    <citation type="journal article" date="2011" name="Biosci. Biotechnol. Biochem.">
        <title>A novel small protein of Bacillus subtilis involved in spore germination and spore coat assembly.</title>
        <authorList>
            <person name="Kodama T."/>
            <person name="Matsubayashi T."/>
            <person name="Yanagihara T."/>
            <person name="Komoto H."/>
            <person name="Ara K."/>
            <person name="Ozaki K."/>
            <person name="Kuwana R."/>
            <person name="Imamura D."/>
            <person name="Takamatsu H."/>
            <person name="Watabe K."/>
            <person name="Sekiguchi J."/>
        </authorList>
    </citation>
    <scope>IDENTIFICATION</scope>
    <scope>DEVELOPMENTAL STAGE</scope>
    <scope>INDUCTION</scope>
    <source>
        <strain>168</strain>
    </source>
</reference>